<sequence length="301" mass="33504">MKQVGLRIDVDTYRGTQYGVPSLLTVLEKHDIRASFFFSVGPDNMGRHLWRLFRPRFLWKMLRSNAASLYGWDILLAGTAWPGKKIAKDFGPLMKAAAMAGHEVGLHAWDHQGWQANVASWSQQQLTEQVQRGVDTLQQSIGQPISCSAAAGWRADERVLAVKQQFDFSYNSDCRGTHPFRPLLPNGSLGSVQIPVTLPTYDEVVGGEVQAENFNDFIIDAILRDSGVSVYTIHAEVEGMSQAAMFEQLLMRAKQQDIEFCPLSKLLPSDLQLLPVGKVIRAAFPGREGWLGCQSDIKDAE</sequence>
<name>ARND_YERPS</name>
<evidence type="ECO:0000255" key="1">
    <source>
        <dbReference type="HAMAP-Rule" id="MF_01870"/>
    </source>
</evidence>
<evidence type="ECO:0000269" key="2">
    <source>
    </source>
</evidence>
<feature type="chain" id="PRO_0000383556" description="Probable 4-deoxy-4-formamido-L-arabinose-phosphoundecaprenol deformylase ArnD">
    <location>
        <begin position="1"/>
        <end position="301"/>
    </location>
</feature>
<feature type="domain" description="NodB homology" evidence="1">
    <location>
        <begin position="2"/>
        <end position="261"/>
    </location>
</feature>
<gene>
    <name evidence="1" type="primary">arnD</name>
    <name type="ordered locus">YPTB2327</name>
</gene>
<comment type="function">
    <text evidence="1">Catalyzes the deformylation of 4-deoxy-4-formamido-L-arabinose-phosphoundecaprenol to 4-amino-4-deoxy-L-arabinose-phosphoundecaprenol. The modified arabinose is attached to lipid A and is required for resistance to polymyxin and cationic antimicrobial peptides.</text>
</comment>
<comment type="catalytic activity">
    <reaction evidence="1">
        <text>4-deoxy-4-formamido-alpha-L-arabinopyranosyl di-trans,octa-cis-undecaprenyl phosphate + H2O = 4-amino-4-deoxy-alpha-L-arabinopyranosyl di-trans,octa-cis-undecaprenyl phosphate + formate</text>
        <dbReference type="Rhea" id="RHEA:27734"/>
        <dbReference type="ChEBI" id="CHEBI:15377"/>
        <dbReference type="ChEBI" id="CHEBI:15740"/>
        <dbReference type="ChEBI" id="CHEBI:58909"/>
        <dbReference type="ChEBI" id="CHEBI:60463"/>
        <dbReference type="EC" id="3.5.1.n3"/>
    </reaction>
</comment>
<comment type="pathway">
    <text evidence="1">Glycolipid biosynthesis; 4-amino-4-deoxy-alpha-L-arabinose undecaprenyl phosphate biosynthesis; 4-amino-4-deoxy-alpha-L-arabinose undecaprenyl phosphate from UDP-4-deoxy-4-formamido-beta-L-arabinose and undecaprenyl phosphate: step 2/2.</text>
</comment>
<comment type="pathway">
    <text evidence="1">Bacterial outer membrane biogenesis; lipopolysaccharide biosynthesis.</text>
</comment>
<comment type="induction">
    <text evidence="2">Activated by low magnesium concentrations, via the two-component regulatory system PhoP/PhoQ.</text>
</comment>
<comment type="similarity">
    <text evidence="1">Belongs to the polysaccharide deacetylase family. ArnD deformylase subfamily.</text>
</comment>
<dbReference type="EC" id="3.5.1.n3" evidence="1"/>
<dbReference type="EMBL" id="AF336802">
    <property type="protein sequence ID" value="AAK69643.1"/>
    <property type="molecule type" value="Genomic_DNA"/>
</dbReference>
<dbReference type="EMBL" id="BX936398">
    <property type="protein sequence ID" value="CAH21565.1"/>
    <property type="molecule type" value="Genomic_DNA"/>
</dbReference>
<dbReference type="RefSeq" id="WP_002211822.1">
    <property type="nucleotide sequence ID" value="NZ_CP009712.1"/>
</dbReference>
<dbReference type="SMR" id="Q7BF86"/>
<dbReference type="GeneID" id="57976258"/>
<dbReference type="KEGG" id="ypo:BZ17_127"/>
<dbReference type="KEGG" id="yps:YPTB2327"/>
<dbReference type="PATRIC" id="fig|273123.14.peg.136"/>
<dbReference type="UniPathway" id="UPA00030"/>
<dbReference type="UniPathway" id="UPA00036">
    <property type="reaction ID" value="UER00496"/>
</dbReference>
<dbReference type="Proteomes" id="UP000001011">
    <property type="component" value="Chromosome"/>
</dbReference>
<dbReference type="GO" id="GO:0016020">
    <property type="term" value="C:membrane"/>
    <property type="evidence" value="ECO:0007669"/>
    <property type="project" value="GOC"/>
</dbReference>
<dbReference type="GO" id="GO:0016811">
    <property type="term" value="F:hydrolase activity, acting on carbon-nitrogen (but not peptide) bonds, in linear amides"/>
    <property type="evidence" value="ECO:0007669"/>
    <property type="project" value="UniProtKB-UniRule"/>
</dbReference>
<dbReference type="GO" id="GO:0036108">
    <property type="term" value="P:4-amino-4-deoxy-alpha-L-arabinopyranosyl undecaprenyl phosphate biosynthetic process"/>
    <property type="evidence" value="ECO:0007669"/>
    <property type="project" value="UniProtKB-UniRule"/>
</dbReference>
<dbReference type="GO" id="GO:0009245">
    <property type="term" value="P:lipid A biosynthetic process"/>
    <property type="evidence" value="ECO:0007669"/>
    <property type="project" value="UniProtKB-UniRule"/>
</dbReference>
<dbReference type="GO" id="GO:0009103">
    <property type="term" value="P:lipopolysaccharide biosynthetic process"/>
    <property type="evidence" value="ECO:0007669"/>
    <property type="project" value="UniProtKB-UniRule"/>
</dbReference>
<dbReference type="GO" id="GO:0046677">
    <property type="term" value="P:response to antibiotic"/>
    <property type="evidence" value="ECO:0007669"/>
    <property type="project" value="UniProtKB-KW"/>
</dbReference>
<dbReference type="CDD" id="cd10939">
    <property type="entry name" value="CE4_ArnD"/>
    <property type="match status" value="1"/>
</dbReference>
<dbReference type="Gene3D" id="3.20.20.370">
    <property type="entry name" value="Glycoside hydrolase/deacetylase"/>
    <property type="match status" value="1"/>
</dbReference>
<dbReference type="HAMAP" id="MF_01870">
    <property type="entry name" value="ArnD"/>
    <property type="match status" value="1"/>
</dbReference>
<dbReference type="InterPro" id="IPR023557">
    <property type="entry name" value="ArnD"/>
</dbReference>
<dbReference type="InterPro" id="IPR011330">
    <property type="entry name" value="Glyco_hydro/deAcase_b/a-brl"/>
</dbReference>
<dbReference type="InterPro" id="IPR002509">
    <property type="entry name" value="NODB_dom"/>
</dbReference>
<dbReference type="InterPro" id="IPR050248">
    <property type="entry name" value="Polysacc_deacetylase_ArnD"/>
</dbReference>
<dbReference type="NCBIfam" id="NF011923">
    <property type="entry name" value="PRK15394.1"/>
    <property type="match status" value="1"/>
</dbReference>
<dbReference type="PANTHER" id="PTHR10587:SF137">
    <property type="entry name" value="4-DEOXY-4-FORMAMIDO-L-ARABINOSE-PHOSPHOUNDECAPRENOL DEFORMYLASE ARND-RELATED"/>
    <property type="match status" value="1"/>
</dbReference>
<dbReference type="PANTHER" id="PTHR10587">
    <property type="entry name" value="GLYCOSYL TRANSFERASE-RELATED"/>
    <property type="match status" value="1"/>
</dbReference>
<dbReference type="Pfam" id="PF01522">
    <property type="entry name" value="Polysacc_deac_1"/>
    <property type="match status" value="1"/>
</dbReference>
<dbReference type="SUPFAM" id="SSF88713">
    <property type="entry name" value="Glycoside hydrolase/deacetylase"/>
    <property type="match status" value="1"/>
</dbReference>
<dbReference type="PROSITE" id="PS51677">
    <property type="entry name" value="NODB"/>
    <property type="match status" value="1"/>
</dbReference>
<keyword id="KW-0046">Antibiotic resistance</keyword>
<keyword id="KW-0378">Hydrolase</keyword>
<keyword id="KW-0441">Lipid A biosynthesis</keyword>
<keyword id="KW-0444">Lipid biosynthesis</keyword>
<keyword id="KW-0443">Lipid metabolism</keyword>
<keyword id="KW-0448">Lipopolysaccharide biosynthesis</keyword>
<protein>
    <recommendedName>
        <fullName evidence="1">Probable 4-deoxy-4-formamido-L-arabinose-phosphoundecaprenol deformylase ArnD</fullName>
        <ecNumber evidence="1">3.5.1.n3</ecNumber>
    </recommendedName>
</protein>
<reference key="1">
    <citation type="journal article" date="2004" name="Microbiology">
        <title>The pmrF polymyxin-resistance operon of Yersinia pseudotuberculosis is upregulated by the PhoP-PhoQ two-component system but not by PmrA-PmrB, and is not required for virulence.</title>
        <authorList>
            <person name="Marceau M.B."/>
            <person name="Sebbane F."/>
            <person name="Ewann F."/>
            <person name="Collyn F."/>
            <person name="Lindner B."/>
            <person name="Campos M.A."/>
            <person name="Bengoechea J.-A."/>
            <person name="Simonet M."/>
        </authorList>
    </citation>
    <scope>NUCLEOTIDE SEQUENCE [GENOMIC DNA]</scope>
    <scope>INDUCTION</scope>
    <source>
        <strain>32777 / IP2777 / Serotype O1:b</strain>
    </source>
</reference>
<reference key="2">
    <citation type="journal article" date="2004" name="Proc. Natl. Acad. Sci. U.S.A.">
        <title>Insights into the evolution of Yersinia pestis through whole-genome comparison with Yersinia pseudotuberculosis.</title>
        <authorList>
            <person name="Chain P.S.G."/>
            <person name="Carniel E."/>
            <person name="Larimer F.W."/>
            <person name="Lamerdin J."/>
            <person name="Stoutland P.O."/>
            <person name="Regala W.M."/>
            <person name="Georgescu A.M."/>
            <person name="Vergez L.M."/>
            <person name="Land M.L."/>
            <person name="Motin V.L."/>
            <person name="Brubaker R.R."/>
            <person name="Fowler J."/>
            <person name="Hinnebusch J."/>
            <person name="Marceau M."/>
            <person name="Medigue C."/>
            <person name="Simonet M."/>
            <person name="Chenal-Francisque V."/>
            <person name="Souza B."/>
            <person name="Dacheux D."/>
            <person name="Elliott J.M."/>
            <person name="Derbise A."/>
            <person name="Hauser L.J."/>
            <person name="Garcia E."/>
        </authorList>
    </citation>
    <scope>NUCLEOTIDE SEQUENCE [LARGE SCALE GENOMIC DNA]</scope>
    <source>
        <strain>IP32953</strain>
    </source>
</reference>
<accession>Q7BF86</accession>
<accession>Q66A05</accession>
<proteinExistence type="evidence at transcript level"/>
<organism>
    <name type="scientific">Yersinia pseudotuberculosis serotype I (strain IP32953)</name>
    <dbReference type="NCBI Taxonomy" id="273123"/>
    <lineage>
        <taxon>Bacteria</taxon>
        <taxon>Pseudomonadati</taxon>
        <taxon>Pseudomonadota</taxon>
        <taxon>Gammaproteobacteria</taxon>
        <taxon>Enterobacterales</taxon>
        <taxon>Yersiniaceae</taxon>
        <taxon>Yersinia</taxon>
    </lineage>
</organism>